<protein>
    <recommendedName>
        <fullName evidence="1">Undecaprenyl-diphosphatase</fullName>
        <ecNumber evidence="1">3.6.1.27</ecNumber>
    </recommendedName>
    <alternativeName>
        <fullName evidence="1">Bacitracin resistance protein</fullName>
    </alternativeName>
    <alternativeName>
        <fullName evidence="1">Undecaprenyl pyrophosphate phosphatase</fullName>
    </alternativeName>
</protein>
<dbReference type="EC" id="3.6.1.27" evidence="1"/>
<dbReference type="EMBL" id="CP001103">
    <property type="protein sequence ID" value="AEA96910.1"/>
    <property type="molecule type" value="Genomic_DNA"/>
</dbReference>
<dbReference type="RefSeq" id="WP_012517264.1">
    <property type="nucleotide sequence ID" value="NC_011138.3"/>
</dbReference>
<dbReference type="SMR" id="B4RY28"/>
<dbReference type="GeneID" id="56341237"/>
<dbReference type="KEGG" id="amc:MADE_1003810"/>
<dbReference type="HOGENOM" id="CLU_060296_1_0_6"/>
<dbReference type="Proteomes" id="UP000001870">
    <property type="component" value="Chromosome"/>
</dbReference>
<dbReference type="GO" id="GO:0005886">
    <property type="term" value="C:plasma membrane"/>
    <property type="evidence" value="ECO:0007669"/>
    <property type="project" value="UniProtKB-SubCell"/>
</dbReference>
<dbReference type="GO" id="GO:0050380">
    <property type="term" value="F:undecaprenyl-diphosphatase activity"/>
    <property type="evidence" value="ECO:0007669"/>
    <property type="project" value="UniProtKB-UniRule"/>
</dbReference>
<dbReference type="GO" id="GO:0071555">
    <property type="term" value="P:cell wall organization"/>
    <property type="evidence" value="ECO:0007669"/>
    <property type="project" value="UniProtKB-KW"/>
</dbReference>
<dbReference type="GO" id="GO:0009252">
    <property type="term" value="P:peptidoglycan biosynthetic process"/>
    <property type="evidence" value="ECO:0007669"/>
    <property type="project" value="UniProtKB-KW"/>
</dbReference>
<dbReference type="GO" id="GO:0008360">
    <property type="term" value="P:regulation of cell shape"/>
    <property type="evidence" value="ECO:0007669"/>
    <property type="project" value="UniProtKB-KW"/>
</dbReference>
<dbReference type="GO" id="GO:0046677">
    <property type="term" value="P:response to antibiotic"/>
    <property type="evidence" value="ECO:0007669"/>
    <property type="project" value="UniProtKB-UniRule"/>
</dbReference>
<dbReference type="HAMAP" id="MF_01006">
    <property type="entry name" value="Undec_diphosphatase"/>
    <property type="match status" value="1"/>
</dbReference>
<dbReference type="InterPro" id="IPR003824">
    <property type="entry name" value="UppP"/>
</dbReference>
<dbReference type="NCBIfam" id="NF001393">
    <property type="entry name" value="PRK00281.2-4"/>
    <property type="match status" value="1"/>
</dbReference>
<dbReference type="NCBIfam" id="TIGR00753">
    <property type="entry name" value="undec_PP_bacA"/>
    <property type="match status" value="1"/>
</dbReference>
<dbReference type="PANTHER" id="PTHR30622">
    <property type="entry name" value="UNDECAPRENYL-DIPHOSPHATASE"/>
    <property type="match status" value="1"/>
</dbReference>
<dbReference type="PANTHER" id="PTHR30622:SF4">
    <property type="entry name" value="UNDECAPRENYL-DIPHOSPHATASE"/>
    <property type="match status" value="1"/>
</dbReference>
<dbReference type="Pfam" id="PF02673">
    <property type="entry name" value="BacA"/>
    <property type="match status" value="1"/>
</dbReference>
<reference key="1">
    <citation type="journal article" date="2008" name="ISME J.">
        <title>Comparative genomics of two ecotypes of the marine planktonic copiotroph Alteromonas macleodii suggests alternative lifestyles associated with different kinds of particulate organic matter.</title>
        <authorList>
            <person name="Ivars-Martinez E."/>
            <person name="Martin-Cuadrado A.-B."/>
            <person name="D'Auria G."/>
            <person name="Mira A."/>
            <person name="Ferriera S."/>
            <person name="Johnson J."/>
            <person name="Friedman R."/>
            <person name="Rodriguez-Valera F."/>
        </authorList>
    </citation>
    <scope>NUCLEOTIDE SEQUENCE [LARGE SCALE GENOMIC DNA]</scope>
    <source>
        <strain>DSM 17117 / CIP 110805 / LMG 28347 / Deep ecotype</strain>
    </source>
</reference>
<gene>
    <name evidence="1" type="primary">uppP</name>
    <name type="ordered locus">MADE_1003810</name>
</gene>
<name>UPPP_ALTMD</name>
<accession>B4RY28</accession>
<accession>F2G9Y3</accession>
<proteinExistence type="inferred from homology"/>
<evidence type="ECO:0000255" key="1">
    <source>
        <dbReference type="HAMAP-Rule" id="MF_01006"/>
    </source>
</evidence>
<comment type="function">
    <text evidence="1">Catalyzes the dephosphorylation of undecaprenyl diphosphate (UPP). Confers resistance to bacitracin.</text>
</comment>
<comment type="catalytic activity">
    <reaction evidence="1">
        <text>di-trans,octa-cis-undecaprenyl diphosphate + H2O = di-trans,octa-cis-undecaprenyl phosphate + phosphate + H(+)</text>
        <dbReference type="Rhea" id="RHEA:28094"/>
        <dbReference type="ChEBI" id="CHEBI:15377"/>
        <dbReference type="ChEBI" id="CHEBI:15378"/>
        <dbReference type="ChEBI" id="CHEBI:43474"/>
        <dbReference type="ChEBI" id="CHEBI:58405"/>
        <dbReference type="ChEBI" id="CHEBI:60392"/>
        <dbReference type="EC" id="3.6.1.27"/>
    </reaction>
</comment>
<comment type="subcellular location">
    <subcellularLocation>
        <location evidence="1">Cell inner membrane</location>
        <topology evidence="1">Multi-pass membrane protein</topology>
    </subcellularLocation>
</comment>
<comment type="miscellaneous">
    <text>Bacitracin is thought to be involved in the inhibition of peptidoglycan synthesis by sequestering undecaprenyl diphosphate, thereby reducing the pool of lipid carrier available.</text>
</comment>
<comment type="similarity">
    <text evidence="1">Belongs to the UppP family.</text>
</comment>
<sequence>MTLFEIIILAIIQGVTEFLPISSSGHLLLPAELLGWVSQGLAFDVAVHVGSLLAVMIYFRQEIGQMTVAWVTQGFSKQQSTDSKLAWYVIVGTIPAVIIGFLMKGWIEENARTALVIAGTTIIFGLLLWYADATAKREQELEGLTLKQAIYIGLAQVLALIPGTSRSGITMTAGLMLGLKREACARFSFLLSIPVILGAGLLATLDLLSANEAVDWYALLYGAAFSFVSAYLCIYLFLSWIARIGMLPFVIYRLALGAVLLWFVFA</sequence>
<organism>
    <name type="scientific">Alteromonas mediterranea (strain DSM 17117 / CIP 110805 / LMG 28347 / Deep ecotype)</name>
    <dbReference type="NCBI Taxonomy" id="1774373"/>
    <lineage>
        <taxon>Bacteria</taxon>
        <taxon>Pseudomonadati</taxon>
        <taxon>Pseudomonadota</taxon>
        <taxon>Gammaproteobacteria</taxon>
        <taxon>Alteromonadales</taxon>
        <taxon>Alteromonadaceae</taxon>
        <taxon>Alteromonas/Salinimonas group</taxon>
        <taxon>Alteromonas</taxon>
    </lineage>
</organism>
<feature type="chain" id="PRO_1000134678" description="Undecaprenyl-diphosphatase">
    <location>
        <begin position="1"/>
        <end position="266"/>
    </location>
</feature>
<feature type="transmembrane region" description="Helical" evidence="1">
    <location>
        <begin position="1"/>
        <end position="21"/>
    </location>
</feature>
<feature type="transmembrane region" description="Helical" evidence="1">
    <location>
        <begin position="39"/>
        <end position="59"/>
    </location>
</feature>
<feature type="transmembrane region" description="Helical" evidence="1">
    <location>
        <begin position="87"/>
        <end position="107"/>
    </location>
</feature>
<feature type="transmembrane region" description="Helical" evidence="1">
    <location>
        <begin position="113"/>
        <end position="133"/>
    </location>
</feature>
<feature type="transmembrane region" description="Helical" evidence="1">
    <location>
        <begin position="143"/>
        <end position="163"/>
    </location>
</feature>
<feature type="transmembrane region" description="Helical" evidence="1">
    <location>
        <begin position="187"/>
        <end position="207"/>
    </location>
</feature>
<feature type="transmembrane region" description="Helical" evidence="1">
    <location>
        <begin position="218"/>
        <end position="238"/>
    </location>
</feature>
<feature type="transmembrane region" description="Helical" evidence="1">
    <location>
        <begin position="244"/>
        <end position="264"/>
    </location>
</feature>
<keyword id="KW-0046">Antibiotic resistance</keyword>
<keyword id="KW-0997">Cell inner membrane</keyword>
<keyword id="KW-1003">Cell membrane</keyword>
<keyword id="KW-0133">Cell shape</keyword>
<keyword id="KW-0961">Cell wall biogenesis/degradation</keyword>
<keyword id="KW-0378">Hydrolase</keyword>
<keyword id="KW-0472">Membrane</keyword>
<keyword id="KW-0573">Peptidoglycan synthesis</keyword>
<keyword id="KW-0812">Transmembrane</keyword>
<keyword id="KW-1133">Transmembrane helix</keyword>